<gene>
    <name evidence="1" type="primary">rpsJ</name>
    <name evidence="1" type="synonym">rps10</name>
    <name type="ordered locus">Syncc9902_2023</name>
</gene>
<protein>
    <recommendedName>
        <fullName evidence="1">Small ribosomal subunit protein uS10</fullName>
    </recommendedName>
    <alternativeName>
        <fullName evidence="2">30S ribosomal protein S10</fullName>
    </alternativeName>
</protein>
<accession>Q3AW52</accession>
<comment type="function">
    <text evidence="1">Involved in the binding of tRNA to the ribosomes.</text>
</comment>
<comment type="subunit">
    <text evidence="1">Part of the 30S ribosomal subunit.</text>
</comment>
<comment type="similarity">
    <text evidence="1">Belongs to the universal ribosomal protein uS10 family.</text>
</comment>
<keyword id="KW-1185">Reference proteome</keyword>
<keyword id="KW-0687">Ribonucleoprotein</keyword>
<keyword id="KW-0689">Ribosomal protein</keyword>
<sequence length="106" mass="12017">MSTAIAQQKIRIRLKAFDRRMLDLSCDKIIETADTTAASAIGPIPLPTKRKIYCVLRSPHVDKDSREHFETRTHRRIIDIYSPSAKTIDALMKLDLPSGVDIEVKL</sequence>
<reference key="1">
    <citation type="submission" date="2005-08" db="EMBL/GenBank/DDBJ databases">
        <title>Complete sequence of Synechococcus sp. CC9902.</title>
        <authorList>
            <person name="Copeland A."/>
            <person name="Lucas S."/>
            <person name="Lapidus A."/>
            <person name="Barry K."/>
            <person name="Detter J.C."/>
            <person name="Glavina T."/>
            <person name="Hammon N."/>
            <person name="Israni S."/>
            <person name="Pitluck S."/>
            <person name="Martinez M."/>
            <person name="Schmutz J."/>
            <person name="Larimer F."/>
            <person name="Land M."/>
            <person name="Kyrpides N."/>
            <person name="Ivanova N."/>
            <person name="Richardson P."/>
        </authorList>
    </citation>
    <scope>NUCLEOTIDE SEQUENCE [LARGE SCALE GENOMIC DNA]</scope>
    <source>
        <strain>CC9902</strain>
    </source>
</reference>
<evidence type="ECO:0000255" key="1">
    <source>
        <dbReference type="HAMAP-Rule" id="MF_00508"/>
    </source>
</evidence>
<evidence type="ECO:0000305" key="2"/>
<proteinExistence type="inferred from homology"/>
<dbReference type="EMBL" id="CP000097">
    <property type="protein sequence ID" value="ABB26981.1"/>
    <property type="molecule type" value="Genomic_DNA"/>
</dbReference>
<dbReference type="RefSeq" id="WP_009788866.1">
    <property type="nucleotide sequence ID" value="NC_007513.1"/>
</dbReference>
<dbReference type="SMR" id="Q3AW52"/>
<dbReference type="STRING" id="316279.Syncc9902_2023"/>
<dbReference type="KEGG" id="sye:Syncc9902_2023"/>
<dbReference type="eggNOG" id="COG0051">
    <property type="taxonomic scope" value="Bacteria"/>
</dbReference>
<dbReference type="HOGENOM" id="CLU_122625_1_3_3"/>
<dbReference type="OrthoDB" id="9804464at2"/>
<dbReference type="Proteomes" id="UP000002712">
    <property type="component" value="Chromosome"/>
</dbReference>
<dbReference type="GO" id="GO:1990904">
    <property type="term" value="C:ribonucleoprotein complex"/>
    <property type="evidence" value="ECO:0007669"/>
    <property type="project" value="UniProtKB-KW"/>
</dbReference>
<dbReference type="GO" id="GO:0005840">
    <property type="term" value="C:ribosome"/>
    <property type="evidence" value="ECO:0007669"/>
    <property type="project" value="UniProtKB-KW"/>
</dbReference>
<dbReference type="GO" id="GO:0003735">
    <property type="term" value="F:structural constituent of ribosome"/>
    <property type="evidence" value="ECO:0007669"/>
    <property type="project" value="InterPro"/>
</dbReference>
<dbReference type="GO" id="GO:0000049">
    <property type="term" value="F:tRNA binding"/>
    <property type="evidence" value="ECO:0007669"/>
    <property type="project" value="UniProtKB-UniRule"/>
</dbReference>
<dbReference type="GO" id="GO:0006412">
    <property type="term" value="P:translation"/>
    <property type="evidence" value="ECO:0007669"/>
    <property type="project" value="UniProtKB-UniRule"/>
</dbReference>
<dbReference type="FunFam" id="3.30.70.600:FF:000001">
    <property type="entry name" value="30S ribosomal protein S10"/>
    <property type="match status" value="1"/>
</dbReference>
<dbReference type="Gene3D" id="3.30.70.600">
    <property type="entry name" value="Ribosomal protein S10 domain"/>
    <property type="match status" value="1"/>
</dbReference>
<dbReference type="HAMAP" id="MF_00508">
    <property type="entry name" value="Ribosomal_uS10"/>
    <property type="match status" value="1"/>
</dbReference>
<dbReference type="InterPro" id="IPR001848">
    <property type="entry name" value="Ribosomal_uS10"/>
</dbReference>
<dbReference type="InterPro" id="IPR027486">
    <property type="entry name" value="Ribosomal_uS10_dom"/>
</dbReference>
<dbReference type="InterPro" id="IPR036838">
    <property type="entry name" value="Ribosomal_uS10_dom_sf"/>
</dbReference>
<dbReference type="NCBIfam" id="NF001861">
    <property type="entry name" value="PRK00596.1"/>
    <property type="match status" value="1"/>
</dbReference>
<dbReference type="NCBIfam" id="TIGR01049">
    <property type="entry name" value="rpsJ_bact"/>
    <property type="match status" value="1"/>
</dbReference>
<dbReference type="PANTHER" id="PTHR11700">
    <property type="entry name" value="30S RIBOSOMAL PROTEIN S10 FAMILY MEMBER"/>
    <property type="match status" value="1"/>
</dbReference>
<dbReference type="Pfam" id="PF00338">
    <property type="entry name" value="Ribosomal_S10"/>
    <property type="match status" value="1"/>
</dbReference>
<dbReference type="PRINTS" id="PR00971">
    <property type="entry name" value="RIBOSOMALS10"/>
</dbReference>
<dbReference type="SMART" id="SM01403">
    <property type="entry name" value="Ribosomal_S10"/>
    <property type="match status" value="1"/>
</dbReference>
<dbReference type="SUPFAM" id="SSF54999">
    <property type="entry name" value="Ribosomal protein S10"/>
    <property type="match status" value="1"/>
</dbReference>
<organism>
    <name type="scientific">Synechococcus sp. (strain CC9902)</name>
    <dbReference type="NCBI Taxonomy" id="316279"/>
    <lineage>
        <taxon>Bacteria</taxon>
        <taxon>Bacillati</taxon>
        <taxon>Cyanobacteriota</taxon>
        <taxon>Cyanophyceae</taxon>
        <taxon>Synechococcales</taxon>
        <taxon>Synechococcaceae</taxon>
        <taxon>Synechococcus</taxon>
    </lineage>
</organism>
<name>RS10_SYNS9</name>
<feature type="chain" id="PRO_0000237106" description="Small ribosomal subunit protein uS10">
    <location>
        <begin position="1"/>
        <end position="106"/>
    </location>
</feature>